<reference key="1">
    <citation type="journal article" date="1995" name="Science">
        <title>The minimal gene complement of Mycoplasma genitalium.</title>
        <authorList>
            <person name="Fraser C.M."/>
            <person name="Gocayne J.D."/>
            <person name="White O."/>
            <person name="Adams M.D."/>
            <person name="Clayton R.A."/>
            <person name="Fleischmann R.D."/>
            <person name="Bult C.J."/>
            <person name="Kerlavage A.R."/>
            <person name="Sutton G.G."/>
            <person name="Kelley J.M."/>
            <person name="Fritchman J.L."/>
            <person name="Weidman J.F."/>
            <person name="Small K.V."/>
            <person name="Sandusky M."/>
            <person name="Fuhrmann J.L."/>
            <person name="Nguyen D.T."/>
            <person name="Utterback T.R."/>
            <person name="Saudek D.M."/>
            <person name="Phillips C.A."/>
            <person name="Merrick J.M."/>
            <person name="Tomb J.-F."/>
            <person name="Dougherty B.A."/>
            <person name="Bott K.F."/>
            <person name="Hu P.-C."/>
            <person name="Lucier T.S."/>
            <person name="Peterson S.N."/>
            <person name="Smith H.O."/>
            <person name="Hutchison C.A. III"/>
            <person name="Venter J.C."/>
        </authorList>
    </citation>
    <scope>NUCLEOTIDE SEQUENCE [LARGE SCALE GENOMIC DNA]</scope>
    <source>
        <strain>ATCC 33530 / DSM 19775 / NCTC 10195 / G37</strain>
    </source>
</reference>
<reference key="2">
    <citation type="unpublished observations" date="2001-05">
        <authorList>
            <person name="Medigue C."/>
            <person name="Bocs S."/>
        </authorList>
    </citation>
    <scope>IDENTIFICATION</scope>
</reference>
<keyword id="KW-1003">Cell membrane</keyword>
<keyword id="KW-0472">Membrane</keyword>
<keyword id="KW-0653">Protein transport</keyword>
<keyword id="KW-1185">Reference proteome</keyword>
<keyword id="KW-0811">Translocation</keyword>
<keyword id="KW-0812">Transmembrane</keyword>
<keyword id="KW-1133">Transmembrane helix</keyword>
<keyword id="KW-0813">Transport</keyword>
<protein>
    <recommendedName>
        <fullName>Probable protein-export membrane protein SecG</fullName>
    </recommendedName>
</protein>
<comment type="function">
    <text evidence="1">Involved in protein export. Participates in an early event of protein translocation (By similarity).</text>
</comment>
<comment type="subcellular location">
    <subcellularLocation>
        <location evidence="1">Cell membrane</location>
        <topology evidence="1">Multi-pass membrane protein</topology>
    </subcellularLocation>
</comment>
<comment type="similarity">
    <text evidence="3">Belongs to the SecG family.</text>
</comment>
<gene>
    <name type="primary">secG</name>
    <name type="ordered locus">MG103.1</name>
    <name type="ORF">MG_476</name>
</gene>
<evidence type="ECO:0000250" key="1"/>
<evidence type="ECO:0000255" key="2"/>
<evidence type="ECO:0000305" key="3"/>
<feature type="chain" id="PRO_0000157231" description="Probable protein-export membrane protein SecG">
    <location>
        <begin position="1"/>
        <end position="77"/>
    </location>
</feature>
<feature type="transmembrane region" description="Helical" evidence="2">
    <location>
        <begin position="3"/>
        <end position="23"/>
    </location>
</feature>
<feature type="transmembrane region" description="Helical" evidence="2">
    <location>
        <begin position="56"/>
        <end position="76"/>
    </location>
</feature>
<organism>
    <name type="scientific">Mycoplasma genitalium (strain ATCC 33530 / DSM 19775 / NCTC 10195 / G37)</name>
    <name type="common">Mycoplasmoides genitalium</name>
    <dbReference type="NCBI Taxonomy" id="243273"/>
    <lineage>
        <taxon>Bacteria</taxon>
        <taxon>Bacillati</taxon>
        <taxon>Mycoplasmatota</taxon>
        <taxon>Mycoplasmoidales</taxon>
        <taxon>Mycoplasmoidaceae</taxon>
        <taxon>Mycoplasmoides</taxon>
    </lineage>
</organism>
<name>SECG_MYCGE</name>
<accession>P58061</accession>
<accession>Q2MHT1</accession>
<proteinExistence type="inferred from homology"/>
<dbReference type="EMBL" id="L43967">
    <property type="protein sequence ID" value="ABC59632.1"/>
    <property type="molecule type" value="Genomic_DNA"/>
</dbReference>
<dbReference type="RefSeq" id="WP_010869333.1">
    <property type="nucleotide sequence ID" value="NC_000908.2"/>
</dbReference>
<dbReference type="SMR" id="P58061"/>
<dbReference type="STRING" id="243273.MG_476"/>
<dbReference type="GeneID" id="88282227"/>
<dbReference type="KEGG" id="mge:MG_476"/>
<dbReference type="eggNOG" id="ENOG5031YUF">
    <property type="taxonomic scope" value="Bacteria"/>
</dbReference>
<dbReference type="HOGENOM" id="CLU_196584_0_0_14"/>
<dbReference type="InParanoid" id="P58061"/>
<dbReference type="OrthoDB" id="401067at2"/>
<dbReference type="BioCyc" id="MGEN243273:G1GJ2-116-MONOMER"/>
<dbReference type="Proteomes" id="UP000000807">
    <property type="component" value="Chromosome"/>
</dbReference>
<dbReference type="GO" id="GO:0005886">
    <property type="term" value="C:plasma membrane"/>
    <property type="evidence" value="ECO:0007669"/>
    <property type="project" value="UniProtKB-SubCell"/>
</dbReference>
<dbReference type="GO" id="GO:0015450">
    <property type="term" value="F:protein-transporting ATPase activity"/>
    <property type="evidence" value="ECO:0007669"/>
    <property type="project" value="InterPro"/>
</dbReference>
<dbReference type="GO" id="GO:0009306">
    <property type="term" value="P:protein secretion"/>
    <property type="evidence" value="ECO:0007669"/>
    <property type="project" value="InterPro"/>
</dbReference>
<dbReference type="InterPro" id="IPR004692">
    <property type="entry name" value="SecG"/>
</dbReference>
<dbReference type="NCBIfam" id="TIGR00810">
    <property type="entry name" value="secG"/>
    <property type="match status" value="1"/>
</dbReference>
<sequence>MHPIQIVMFIMAVICLIIGLLLSNHGSTGGLASLSGQDLEIFRKTKDRGFVKILQIIMFILVVLFLILGLIFSFAPR</sequence>